<sequence length="94" mass="10491">MKFIKETKEGVLIMIYVQPKAKKNAIEGVDGWRGRLKVRIAAPPVEGKANKEVVKFFSKLLGAEVNIVRGETSREKDLLVKGLSVEEVRKKLGV</sequence>
<organism>
    <name type="scientific">Thermococcus kodakarensis (strain ATCC BAA-918 / JCM 12380 / KOD1)</name>
    <name type="common">Pyrococcus kodakaraensis (strain KOD1)</name>
    <dbReference type="NCBI Taxonomy" id="69014"/>
    <lineage>
        <taxon>Archaea</taxon>
        <taxon>Methanobacteriati</taxon>
        <taxon>Methanobacteriota</taxon>
        <taxon>Thermococci</taxon>
        <taxon>Thermococcales</taxon>
        <taxon>Thermococcaceae</taxon>
        <taxon>Thermococcus</taxon>
    </lineage>
</organism>
<accession>Q5JHB2</accession>
<dbReference type="EMBL" id="AP006878">
    <property type="protein sequence ID" value="BAD84957.1"/>
    <property type="molecule type" value="Genomic_DNA"/>
</dbReference>
<dbReference type="RefSeq" id="WP_011249719.1">
    <property type="nucleotide sequence ID" value="NC_006624.1"/>
</dbReference>
<dbReference type="SMR" id="Q5JHB2"/>
<dbReference type="FunCoup" id="Q5JHB2">
    <property type="interactions" value="4"/>
</dbReference>
<dbReference type="STRING" id="69014.TK0768"/>
<dbReference type="EnsemblBacteria" id="BAD84957">
    <property type="protein sequence ID" value="BAD84957"/>
    <property type="gene ID" value="TK0768"/>
</dbReference>
<dbReference type="GeneID" id="78447283"/>
<dbReference type="KEGG" id="tko:TK0768"/>
<dbReference type="PATRIC" id="fig|69014.16.peg.748"/>
<dbReference type="eggNOG" id="arCOG04058">
    <property type="taxonomic scope" value="Archaea"/>
</dbReference>
<dbReference type="HOGENOM" id="CLU_130694_6_1_2"/>
<dbReference type="InParanoid" id="Q5JHB2"/>
<dbReference type="OrthoDB" id="53248at2157"/>
<dbReference type="PhylomeDB" id="Q5JHB2"/>
<dbReference type="Proteomes" id="UP000000536">
    <property type="component" value="Chromosome"/>
</dbReference>
<dbReference type="GO" id="GO:0005737">
    <property type="term" value="C:cytoplasm"/>
    <property type="evidence" value="ECO:0000318"/>
    <property type="project" value="GO_Central"/>
</dbReference>
<dbReference type="Gene3D" id="3.30.1200.10">
    <property type="entry name" value="YggU-like"/>
    <property type="match status" value="1"/>
</dbReference>
<dbReference type="HAMAP" id="MF_00634">
    <property type="entry name" value="UPF0235"/>
    <property type="match status" value="1"/>
</dbReference>
<dbReference type="InterPro" id="IPR003746">
    <property type="entry name" value="DUF167"/>
</dbReference>
<dbReference type="InterPro" id="IPR036591">
    <property type="entry name" value="YggU-like_sf"/>
</dbReference>
<dbReference type="NCBIfam" id="TIGR00251">
    <property type="entry name" value="DUF167 family protein"/>
    <property type="match status" value="1"/>
</dbReference>
<dbReference type="PANTHER" id="PTHR13420">
    <property type="entry name" value="UPF0235 PROTEIN C15ORF40"/>
    <property type="match status" value="1"/>
</dbReference>
<dbReference type="PANTHER" id="PTHR13420:SF7">
    <property type="entry name" value="UPF0235 PROTEIN C15ORF40"/>
    <property type="match status" value="1"/>
</dbReference>
<dbReference type="Pfam" id="PF02594">
    <property type="entry name" value="DUF167"/>
    <property type="match status" value="1"/>
</dbReference>
<dbReference type="SMART" id="SM01152">
    <property type="entry name" value="DUF167"/>
    <property type="match status" value="1"/>
</dbReference>
<dbReference type="SUPFAM" id="SSF69786">
    <property type="entry name" value="YggU-like"/>
    <property type="match status" value="1"/>
</dbReference>
<feature type="chain" id="PRO_0000139474" description="UPF0235 protein TK0768">
    <location>
        <begin position="1"/>
        <end position="94"/>
    </location>
</feature>
<keyword id="KW-1185">Reference proteome</keyword>
<evidence type="ECO:0000255" key="1">
    <source>
        <dbReference type="HAMAP-Rule" id="MF_00634"/>
    </source>
</evidence>
<comment type="similarity">
    <text evidence="1">Belongs to the UPF0235 family.</text>
</comment>
<proteinExistence type="inferred from homology"/>
<gene>
    <name type="ordered locus">TK0768</name>
</gene>
<reference key="1">
    <citation type="journal article" date="2005" name="Genome Res.">
        <title>Complete genome sequence of the hyperthermophilic archaeon Thermococcus kodakaraensis KOD1 and comparison with Pyrococcus genomes.</title>
        <authorList>
            <person name="Fukui T."/>
            <person name="Atomi H."/>
            <person name="Kanai T."/>
            <person name="Matsumi R."/>
            <person name="Fujiwara S."/>
            <person name="Imanaka T."/>
        </authorList>
    </citation>
    <scope>NUCLEOTIDE SEQUENCE [LARGE SCALE GENOMIC DNA]</scope>
    <source>
        <strain>ATCC BAA-918 / JCM 12380 / KOD1</strain>
    </source>
</reference>
<protein>
    <recommendedName>
        <fullName evidence="1">UPF0235 protein TK0768</fullName>
    </recommendedName>
</protein>
<name>Y768_THEKO</name>